<keyword id="KW-0143">Chaperone</keyword>
<keyword id="KW-0963">Cytoplasm</keyword>
<keyword id="KW-1185">Reference proteome</keyword>
<keyword id="KW-0690">Ribosome biogenesis</keyword>
<keyword id="KW-0698">rRNA processing</keyword>
<comment type="function">
    <text evidence="1">An accessory protein needed during the final step in the assembly of 30S ribosomal subunit, possibly for assembly of the head region. Essential for efficient processing of 16S rRNA. May be needed both before and after RbfA during the maturation of 16S rRNA. It has affinity for free ribosomal 30S subunits but not for 70S ribosomes.</text>
</comment>
<comment type="subunit">
    <text evidence="1">Binds ribosomal protein uS19.</text>
</comment>
<comment type="subcellular location">
    <subcellularLocation>
        <location evidence="1">Cytoplasm</location>
    </subcellularLocation>
</comment>
<comment type="domain">
    <text evidence="1">The PRC barrel domain binds ribosomal protein uS19.</text>
</comment>
<comment type="similarity">
    <text evidence="1">Belongs to the RimM family.</text>
</comment>
<name>RIMM_ROSCS</name>
<dbReference type="EMBL" id="CP000804">
    <property type="protein sequence ID" value="ABU57756.1"/>
    <property type="molecule type" value="Genomic_DNA"/>
</dbReference>
<dbReference type="RefSeq" id="WP_012120184.1">
    <property type="nucleotide sequence ID" value="NC_009767.1"/>
</dbReference>
<dbReference type="SMR" id="A7NJT6"/>
<dbReference type="STRING" id="383372.Rcas_1664"/>
<dbReference type="KEGG" id="rca:Rcas_1664"/>
<dbReference type="eggNOG" id="COG0806">
    <property type="taxonomic scope" value="Bacteria"/>
</dbReference>
<dbReference type="HOGENOM" id="CLU_077636_3_2_0"/>
<dbReference type="OrthoDB" id="9810331at2"/>
<dbReference type="Proteomes" id="UP000000263">
    <property type="component" value="Chromosome"/>
</dbReference>
<dbReference type="GO" id="GO:0005737">
    <property type="term" value="C:cytoplasm"/>
    <property type="evidence" value="ECO:0007669"/>
    <property type="project" value="UniProtKB-SubCell"/>
</dbReference>
<dbReference type="GO" id="GO:0005840">
    <property type="term" value="C:ribosome"/>
    <property type="evidence" value="ECO:0007669"/>
    <property type="project" value="InterPro"/>
</dbReference>
<dbReference type="GO" id="GO:0043022">
    <property type="term" value="F:ribosome binding"/>
    <property type="evidence" value="ECO:0007669"/>
    <property type="project" value="InterPro"/>
</dbReference>
<dbReference type="GO" id="GO:0042274">
    <property type="term" value="P:ribosomal small subunit biogenesis"/>
    <property type="evidence" value="ECO:0007669"/>
    <property type="project" value="UniProtKB-UniRule"/>
</dbReference>
<dbReference type="GO" id="GO:0006364">
    <property type="term" value="P:rRNA processing"/>
    <property type="evidence" value="ECO:0007669"/>
    <property type="project" value="UniProtKB-UniRule"/>
</dbReference>
<dbReference type="Gene3D" id="2.30.30.240">
    <property type="entry name" value="PRC-barrel domain"/>
    <property type="match status" value="1"/>
</dbReference>
<dbReference type="Gene3D" id="2.40.30.60">
    <property type="entry name" value="RimM"/>
    <property type="match status" value="1"/>
</dbReference>
<dbReference type="HAMAP" id="MF_00014">
    <property type="entry name" value="Ribosome_mat_RimM"/>
    <property type="match status" value="1"/>
</dbReference>
<dbReference type="InterPro" id="IPR011033">
    <property type="entry name" value="PRC_barrel-like_sf"/>
</dbReference>
<dbReference type="InterPro" id="IPR056792">
    <property type="entry name" value="PRC_RimM"/>
</dbReference>
<dbReference type="InterPro" id="IPR011961">
    <property type="entry name" value="RimM"/>
</dbReference>
<dbReference type="InterPro" id="IPR002676">
    <property type="entry name" value="RimM_N"/>
</dbReference>
<dbReference type="InterPro" id="IPR036976">
    <property type="entry name" value="RimM_N_sf"/>
</dbReference>
<dbReference type="InterPro" id="IPR009000">
    <property type="entry name" value="Transl_B-barrel_sf"/>
</dbReference>
<dbReference type="NCBIfam" id="TIGR02273">
    <property type="entry name" value="16S_RimM"/>
    <property type="match status" value="1"/>
</dbReference>
<dbReference type="PANTHER" id="PTHR33692">
    <property type="entry name" value="RIBOSOME MATURATION FACTOR RIMM"/>
    <property type="match status" value="1"/>
</dbReference>
<dbReference type="PANTHER" id="PTHR33692:SF1">
    <property type="entry name" value="RIBOSOME MATURATION FACTOR RIMM"/>
    <property type="match status" value="1"/>
</dbReference>
<dbReference type="Pfam" id="PF24986">
    <property type="entry name" value="PRC_RimM"/>
    <property type="match status" value="1"/>
</dbReference>
<dbReference type="Pfam" id="PF01782">
    <property type="entry name" value="RimM"/>
    <property type="match status" value="1"/>
</dbReference>
<dbReference type="SUPFAM" id="SSF50346">
    <property type="entry name" value="PRC-barrel domain"/>
    <property type="match status" value="1"/>
</dbReference>
<dbReference type="SUPFAM" id="SSF50447">
    <property type="entry name" value="Translation proteins"/>
    <property type="match status" value="1"/>
</dbReference>
<accession>A7NJT6</accession>
<reference key="1">
    <citation type="submission" date="2007-08" db="EMBL/GenBank/DDBJ databases">
        <title>Complete sequence of Roseiflexus castenholzii DSM 13941.</title>
        <authorList>
            <consortium name="US DOE Joint Genome Institute"/>
            <person name="Copeland A."/>
            <person name="Lucas S."/>
            <person name="Lapidus A."/>
            <person name="Barry K."/>
            <person name="Glavina del Rio T."/>
            <person name="Dalin E."/>
            <person name="Tice H."/>
            <person name="Pitluck S."/>
            <person name="Thompson L.S."/>
            <person name="Brettin T."/>
            <person name="Bruce D."/>
            <person name="Detter J.C."/>
            <person name="Han C."/>
            <person name="Tapia R."/>
            <person name="Schmutz J."/>
            <person name="Larimer F."/>
            <person name="Land M."/>
            <person name="Hauser L."/>
            <person name="Kyrpides N."/>
            <person name="Mikhailova N."/>
            <person name="Bryant D.A."/>
            <person name="Hanada S."/>
            <person name="Tsukatani Y."/>
            <person name="Richardson P."/>
        </authorList>
    </citation>
    <scope>NUCLEOTIDE SEQUENCE [LARGE SCALE GENOMIC DNA]</scope>
    <source>
        <strain>DSM 13941 / HLO8</strain>
    </source>
</reference>
<gene>
    <name evidence="1" type="primary">rimM</name>
    <name type="ordered locus">Rcas_1664</name>
</gene>
<evidence type="ECO:0000255" key="1">
    <source>
        <dbReference type="HAMAP-Rule" id="MF_00014"/>
    </source>
</evidence>
<organism>
    <name type="scientific">Roseiflexus castenholzii (strain DSM 13941 / HLO8)</name>
    <dbReference type="NCBI Taxonomy" id="383372"/>
    <lineage>
        <taxon>Bacteria</taxon>
        <taxon>Bacillati</taxon>
        <taxon>Chloroflexota</taxon>
        <taxon>Chloroflexia</taxon>
        <taxon>Chloroflexales</taxon>
        <taxon>Roseiflexineae</taxon>
        <taxon>Roseiflexaceae</taxon>
        <taxon>Roseiflexus</taxon>
    </lineage>
</organism>
<feature type="chain" id="PRO_0000351792" description="Ribosome maturation factor RimM">
    <location>
        <begin position="1"/>
        <end position="178"/>
    </location>
</feature>
<feature type="domain" description="PRC barrel" evidence="1">
    <location>
        <begin position="100"/>
        <end position="173"/>
    </location>
</feature>
<protein>
    <recommendedName>
        <fullName evidence="1">Ribosome maturation factor RimM</fullName>
    </recommendedName>
</protein>
<sequence>MEDRPSADEVLLIGTVVDAFGLHGEIKVRSVTDRVDHLRHHVQTVFVGEERRPFPLQRIREPKTGVLILTLGGVTDRTMAEALRGAEVTIRECDAAPLEADEYFIHQLYGLRVVESSGAEIGIVREVLQTGANDVIVVERHGRSDTLLPMIHDVVESLDVAAGQIVVRLLPGLIDEEG</sequence>
<proteinExistence type="inferred from homology"/>